<comment type="function">
    <text evidence="1">An accessory protein needed during the final step in the assembly of 30S ribosomal subunit, possibly for assembly of the head region. Essential for efficient processing of 16S rRNA. May be needed both before and after RbfA during the maturation of 16S rRNA. It has affinity for free ribosomal 30S subunits but not for 70S ribosomes.</text>
</comment>
<comment type="subunit">
    <text evidence="1">Binds ribosomal protein uS19.</text>
</comment>
<comment type="subcellular location">
    <subcellularLocation>
        <location evidence="1">Cytoplasm</location>
    </subcellularLocation>
</comment>
<comment type="domain">
    <text evidence="1">The PRC barrel domain binds ribosomal protein uS19.</text>
</comment>
<comment type="similarity">
    <text evidence="1">Belongs to the RimM family.</text>
</comment>
<comment type="sequence caution" evidence="2">
    <conflict type="erroneous initiation">
        <sequence resource="EMBL-CDS" id="ABM08221"/>
    </conflict>
</comment>
<gene>
    <name evidence="1" type="primary">rimM</name>
    <name type="ordered locus">AAur_2450</name>
</gene>
<keyword id="KW-0143">Chaperone</keyword>
<keyword id="KW-0963">Cytoplasm</keyword>
<keyword id="KW-0690">Ribosome biogenesis</keyword>
<keyword id="KW-0698">rRNA processing</keyword>
<dbReference type="EMBL" id="CP000474">
    <property type="protein sequence ID" value="ABM08221.1"/>
    <property type="status" value="ALT_INIT"/>
    <property type="molecule type" value="Genomic_DNA"/>
</dbReference>
<dbReference type="SMR" id="A1R7G4"/>
<dbReference type="STRING" id="290340.AAur_2450"/>
<dbReference type="KEGG" id="aau:AAur_2450"/>
<dbReference type="eggNOG" id="COG0806">
    <property type="taxonomic scope" value="Bacteria"/>
</dbReference>
<dbReference type="HOGENOM" id="CLU_077636_0_0_11"/>
<dbReference type="Proteomes" id="UP000000637">
    <property type="component" value="Chromosome"/>
</dbReference>
<dbReference type="GO" id="GO:0005737">
    <property type="term" value="C:cytoplasm"/>
    <property type="evidence" value="ECO:0007669"/>
    <property type="project" value="UniProtKB-SubCell"/>
</dbReference>
<dbReference type="GO" id="GO:0005840">
    <property type="term" value="C:ribosome"/>
    <property type="evidence" value="ECO:0007669"/>
    <property type="project" value="InterPro"/>
</dbReference>
<dbReference type="GO" id="GO:0043022">
    <property type="term" value="F:ribosome binding"/>
    <property type="evidence" value="ECO:0007669"/>
    <property type="project" value="InterPro"/>
</dbReference>
<dbReference type="GO" id="GO:0042274">
    <property type="term" value="P:ribosomal small subunit biogenesis"/>
    <property type="evidence" value="ECO:0007669"/>
    <property type="project" value="UniProtKB-UniRule"/>
</dbReference>
<dbReference type="GO" id="GO:0006364">
    <property type="term" value="P:rRNA processing"/>
    <property type="evidence" value="ECO:0007669"/>
    <property type="project" value="UniProtKB-UniRule"/>
</dbReference>
<dbReference type="Gene3D" id="2.30.30.240">
    <property type="entry name" value="PRC-barrel domain"/>
    <property type="match status" value="1"/>
</dbReference>
<dbReference type="Gene3D" id="2.40.30.60">
    <property type="entry name" value="RimM"/>
    <property type="match status" value="1"/>
</dbReference>
<dbReference type="HAMAP" id="MF_00014">
    <property type="entry name" value="Ribosome_mat_RimM"/>
    <property type="match status" value="1"/>
</dbReference>
<dbReference type="InterPro" id="IPR011033">
    <property type="entry name" value="PRC_barrel-like_sf"/>
</dbReference>
<dbReference type="InterPro" id="IPR056792">
    <property type="entry name" value="PRC_RimM"/>
</dbReference>
<dbReference type="InterPro" id="IPR011961">
    <property type="entry name" value="RimM"/>
</dbReference>
<dbReference type="InterPro" id="IPR002676">
    <property type="entry name" value="RimM_N"/>
</dbReference>
<dbReference type="InterPro" id="IPR036976">
    <property type="entry name" value="RimM_N_sf"/>
</dbReference>
<dbReference type="InterPro" id="IPR009000">
    <property type="entry name" value="Transl_B-barrel_sf"/>
</dbReference>
<dbReference type="NCBIfam" id="TIGR02273">
    <property type="entry name" value="16S_RimM"/>
    <property type="match status" value="1"/>
</dbReference>
<dbReference type="PANTHER" id="PTHR33692">
    <property type="entry name" value="RIBOSOME MATURATION FACTOR RIMM"/>
    <property type="match status" value="1"/>
</dbReference>
<dbReference type="PANTHER" id="PTHR33692:SF1">
    <property type="entry name" value="RIBOSOME MATURATION FACTOR RIMM"/>
    <property type="match status" value="1"/>
</dbReference>
<dbReference type="Pfam" id="PF24986">
    <property type="entry name" value="PRC_RimM"/>
    <property type="match status" value="1"/>
</dbReference>
<dbReference type="Pfam" id="PF01782">
    <property type="entry name" value="RimM"/>
    <property type="match status" value="1"/>
</dbReference>
<dbReference type="SUPFAM" id="SSF50346">
    <property type="entry name" value="PRC-barrel domain"/>
    <property type="match status" value="1"/>
</dbReference>
<dbReference type="SUPFAM" id="SSF50447">
    <property type="entry name" value="Translation proteins"/>
    <property type="match status" value="1"/>
</dbReference>
<feature type="chain" id="PRO_0000351718" description="Ribosome maturation factor RimM">
    <location>
        <begin position="1"/>
        <end position="184"/>
    </location>
</feature>
<feature type="domain" description="PRC barrel" evidence="1">
    <location>
        <begin position="93"/>
        <end position="165"/>
    </location>
</feature>
<name>RIMM_PAEAT</name>
<sequence>MQLQVARIGKPHGIRGEVTVQVLTDAPSERFVAGTEFVVEPASAGPLTIRSARWNKDILLLGFEEIADRNAAEVIRGAKLFIETEELSDEDDDEGWYEHELVGLEARVGSQVVGKVAALSTLPVQDLLTVTTEEGKEILIPFVDEIVPEVNVEGGYILITPPSGLFEINDENAKEPKDGAGDDA</sequence>
<organism>
    <name type="scientific">Paenarthrobacter aurescens (strain TC1)</name>
    <dbReference type="NCBI Taxonomy" id="290340"/>
    <lineage>
        <taxon>Bacteria</taxon>
        <taxon>Bacillati</taxon>
        <taxon>Actinomycetota</taxon>
        <taxon>Actinomycetes</taxon>
        <taxon>Micrococcales</taxon>
        <taxon>Micrococcaceae</taxon>
        <taxon>Paenarthrobacter</taxon>
    </lineage>
</organism>
<reference key="1">
    <citation type="journal article" date="2006" name="PLoS Genet.">
        <title>Secrets of soil survival revealed by the genome sequence of Arthrobacter aurescens TC1.</title>
        <authorList>
            <person name="Mongodin E.F."/>
            <person name="Shapir N."/>
            <person name="Daugherty S.C."/>
            <person name="DeBoy R.T."/>
            <person name="Emerson J.B."/>
            <person name="Shvartzbeyn A."/>
            <person name="Radune D."/>
            <person name="Vamathevan J."/>
            <person name="Riggs F."/>
            <person name="Grinberg V."/>
            <person name="Khouri H.M."/>
            <person name="Wackett L.P."/>
            <person name="Nelson K.E."/>
            <person name="Sadowsky M.J."/>
        </authorList>
    </citation>
    <scope>NUCLEOTIDE SEQUENCE [LARGE SCALE GENOMIC DNA]</scope>
    <source>
        <strain>TC1</strain>
    </source>
</reference>
<proteinExistence type="inferred from homology"/>
<accession>A1R7G4</accession>
<evidence type="ECO:0000255" key="1">
    <source>
        <dbReference type="HAMAP-Rule" id="MF_00014"/>
    </source>
</evidence>
<evidence type="ECO:0000305" key="2"/>
<protein>
    <recommendedName>
        <fullName evidence="1">Ribosome maturation factor RimM</fullName>
    </recommendedName>
</protein>